<feature type="chain" id="PRO_0000323246" description="Potassium/proton antiporter CemA">
    <location>
        <begin position="1"/>
        <end position="445"/>
    </location>
</feature>
<feature type="transmembrane region" description="Helical" evidence="1">
    <location>
        <begin position="44"/>
        <end position="64"/>
    </location>
</feature>
<feature type="transmembrane region" description="Helical" evidence="1">
    <location>
        <begin position="330"/>
        <end position="350"/>
    </location>
</feature>
<feature type="transmembrane region" description="Helical" evidence="1">
    <location>
        <begin position="368"/>
        <end position="388"/>
    </location>
</feature>
<feature type="transmembrane region" description="Helical" evidence="1">
    <location>
        <begin position="405"/>
        <end position="425"/>
    </location>
</feature>
<organism>
    <name type="scientific">Pleurastrum terricola</name>
    <name type="common">Filamentous green alga</name>
    <name type="synonym">Leptosira terrestris</name>
    <dbReference type="NCBI Taxonomy" id="34116"/>
    <lineage>
        <taxon>Eukaryota</taxon>
        <taxon>Viridiplantae</taxon>
        <taxon>Chlorophyta</taxon>
        <taxon>core chlorophytes</taxon>
        <taxon>Chlorophyceae</taxon>
        <taxon>CS clade</taxon>
        <taxon>Chlamydomonadales</taxon>
        <taxon>Pleurastraceae</taxon>
        <taxon>Pleurastrum</taxon>
    </lineage>
</organism>
<keyword id="KW-0050">Antiport</keyword>
<keyword id="KW-0150">Chloroplast</keyword>
<keyword id="KW-0375">Hydrogen ion transport</keyword>
<keyword id="KW-0406">Ion transport</keyword>
<keyword id="KW-0472">Membrane</keyword>
<keyword id="KW-0934">Plastid</keyword>
<keyword id="KW-1001">Plastid inner membrane</keyword>
<keyword id="KW-0630">Potassium</keyword>
<keyword id="KW-0633">Potassium transport</keyword>
<keyword id="KW-0812">Transmembrane</keyword>
<keyword id="KW-1133">Transmembrane helix</keyword>
<keyword id="KW-0813">Transport</keyword>
<accession>A6YG79</accession>
<gene>
    <name evidence="1" type="primary">cemA</name>
</gene>
<protein>
    <recommendedName>
        <fullName evidence="1">Potassium/proton antiporter CemA</fullName>
    </recommendedName>
    <alternativeName>
        <fullName evidence="1">Chloroplast envelope membrane protein A</fullName>
        <shortName evidence="1">CemA</shortName>
    </alternativeName>
</protein>
<evidence type="ECO:0000255" key="1">
    <source>
        <dbReference type="HAMAP-Rule" id="MF_01308"/>
    </source>
</evidence>
<evidence type="ECO:0000305" key="2"/>
<reference key="1">
    <citation type="journal article" date="2007" name="BMC Genomics">
        <title>The chloroplast genome sequence of the green alga Leptosira terrestris: multiple losses of the inverted repeat and extensive genome rearrangements within the Trebouxiophyceae.</title>
        <authorList>
            <person name="de Cambiaire J.-C."/>
            <person name="Otis C."/>
            <person name="Turmel M."/>
            <person name="Lemieux C."/>
        </authorList>
    </citation>
    <scope>NUCLEOTIDE SEQUENCE [LARGE SCALE GENOMIC DNA]</scope>
    <source>
        <strain>CCAP 463/2 / UTEX 333</strain>
    </source>
</reference>
<proteinExistence type="inferred from homology"/>
<comment type="function">
    <text evidence="1">Contributes to K(+)/H(+) antiport activity by supporting proton efflux to control proton extrusion and homeostasis in chloroplasts in a light-dependent manner to modulate photosynthesis. Prevents excessive induction of non-photochemical quenching (NPQ) under continuous-light conditions. Indirectly promotes efficient inorganic carbon uptake into chloroplasts.</text>
</comment>
<comment type="catalytic activity">
    <reaction evidence="1">
        <text>K(+)(in) + H(+)(out) = K(+)(out) + H(+)(in)</text>
        <dbReference type="Rhea" id="RHEA:29467"/>
        <dbReference type="ChEBI" id="CHEBI:15378"/>
        <dbReference type="ChEBI" id="CHEBI:29103"/>
    </reaction>
</comment>
<comment type="subcellular location">
    <subcellularLocation>
        <location evidence="1">Plastid</location>
        <location evidence="1">Chloroplast inner membrane</location>
        <topology evidence="1">Multi-pass membrane protein</topology>
    </subcellularLocation>
</comment>
<comment type="similarity">
    <text evidence="1 2">Belongs to the CemA family.</text>
</comment>
<sequence length="445" mass="51820">MQEKIGLIPRSILRTLDRFRKQLFPNQETKTITLQEFQVSRQQMQVSVVTFLTLVLVPLGVNICGKTFLVKPFTQFLWNNYQTELFLNQFQAQRAFTEMQEIEDVLFFDSLIQNTNFCFNCSKAWNNYFVMQPSSYSSNSNFVIQKPDLANSQSKNSTCHNSKLILQKNVFEIYKFSENTDFFKDKMYGEQIHDGVKNSYNEFSSKASNALSNLEAPLYLGSEASLPPKLKNFDSRIFTANQLNRDDKLIYMSLQEQPLVKKQNFLDKYQFAKHETQENVINKPEIYKIEGLLQTSEKDEMELRQDKLVALAIQYNEESIDAISNLIGDALTCITITFLFFGLKVQILILQSFLTESFYSLSNANRSLIIIIVTDLLVGYHSPQGWKLLTQLILQHYGFPETKLFILCFIGTFPVILDTIFKYWIFRHLNRISPTTVLTYHRMIE</sequence>
<geneLocation type="chloroplast"/>
<name>CEMA_PLETE</name>
<dbReference type="EMBL" id="EF506945">
    <property type="protein sequence ID" value="ABO69299.1"/>
    <property type="molecule type" value="Genomic_DNA"/>
</dbReference>
<dbReference type="RefSeq" id="YP_001382156.1">
    <property type="nucleotide sequence ID" value="NC_009681.1"/>
</dbReference>
<dbReference type="SMR" id="A6YG79"/>
<dbReference type="GeneID" id="5383824"/>
<dbReference type="GO" id="GO:0009706">
    <property type="term" value="C:chloroplast inner membrane"/>
    <property type="evidence" value="ECO:0007669"/>
    <property type="project" value="UniProtKB-SubCell"/>
</dbReference>
<dbReference type="GO" id="GO:0015297">
    <property type="term" value="F:antiporter activity"/>
    <property type="evidence" value="ECO:0007669"/>
    <property type="project" value="UniProtKB-KW"/>
</dbReference>
<dbReference type="GO" id="GO:0015078">
    <property type="term" value="F:proton transmembrane transporter activity"/>
    <property type="evidence" value="ECO:0007669"/>
    <property type="project" value="UniProtKB-UniRule"/>
</dbReference>
<dbReference type="GO" id="GO:0006813">
    <property type="term" value="P:potassium ion transport"/>
    <property type="evidence" value="ECO:0007669"/>
    <property type="project" value="UniProtKB-UniRule"/>
</dbReference>
<dbReference type="HAMAP" id="MF_01308">
    <property type="entry name" value="CemA_PxcA"/>
    <property type="match status" value="1"/>
</dbReference>
<dbReference type="InterPro" id="IPR004282">
    <property type="entry name" value="CemA"/>
</dbReference>
<dbReference type="PANTHER" id="PTHR33650:SF2">
    <property type="entry name" value="CHLOROPLAST ENVELOPE MEMBRANE PROTEIN"/>
    <property type="match status" value="1"/>
</dbReference>
<dbReference type="PANTHER" id="PTHR33650">
    <property type="entry name" value="CHLOROPLAST ENVELOPE MEMBRANE PROTEIN-RELATED"/>
    <property type="match status" value="1"/>
</dbReference>
<dbReference type="Pfam" id="PF03040">
    <property type="entry name" value="CemA"/>
    <property type="match status" value="2"/>
</dbReference>